<dbReference type="EC" id="3.4.11.1"/>
<dbReference type="EC" id="3.4.11.10"/>
<dbReference type="EMBL" id="AE003852">
    <property type="protein sequence ID" value="AAF95643.1"/>
    <property type="molecule type" value="Genomic_DNA"/>
</dbReference>
<dbReference type="PIR" id="C82068">
    <property type="entry name" value="C82068"/>
</dbReference>
<dbReference type="RefSeq" id="NP_232130.1">
    <property type="nucleotide sequence ID" value="NC_002505.1"/>
</dbReference>
<dbReference type="RefSeq" id="WP_000397172.1">
    <property type="nucleotide sequence ID" value="NZ_LT906614.1"/>
</dbReference>
<dbReference type="SMR" id="P0C6E1"/>
<dbReference type="STRING" id="243277.VC_2501"/>
<dbReference type="MEROPS" id="M17.003"/>
<dbReference type="DNASU" id="2615165"/>
<dbReference type="EnsemblBacteria" id="AAF95643">
    <property type="protein sequence ID" value="AAF95643"/>
    <property type="gene ID" value="VC_2501"/>
</dbReference>
<dbReference type="GeneID" id="88785064"/>
<dbReference type="KEGG" id="vch:VC_2501"/>
<dbReference type="PATRIC" id="fig|243277.26.peg.2382"/>
<dbReference type="eggNOG" id="COG0260">
    <property type="taxonomic scope" value="Bacteria"/>
</dbReference>
<dbReference type="HOGENOM" id="CLU_013734_2_2_6"/>
<dbReference type="BRENDA" id="3.4.11.1">
    <property type="organism ID" value="6626"/>
</dbReference>
<dbReference type="Proteomes" id="UP000000584">
    <property type="component" value="Chromosome 1"/>
</dbReference>
<dbReference type="GO" id="GO:0005737">
    <property type="term" value="C:cytoplasm"/>
    <property type="evidence" value="ECO:0000318"/>
    <property type="project" value="GO_Central"/>
</dbReference>
<dbReference type="GO" id="GO:0004177">
    <property type="term" value="F:aminopeptidase activity"/>
    <property type="evidence" value="ECO:0000318"/>
    <property type="project" value="GO_Central"/>
</dbReference>
<dbReference type="GO" id="GO:0030145">
    <property type="term" value="F:manganese ion binding"/>
    <property type="evidence" value="ECO:0007669"/>
    <property type="project" value="UniProtKB-UniRule"/>
</dbReference>
<dbReference type="GO" id="GO:0070006">
    <property type="term" value="F:metalloaminopeptidase activity"/>
    <property type="evidence" value="ECO:0007669"/>
    <property type="project" value="InterPro"/>
</dbReference>
<dbReference type="GO" id="GO:0006508">
    <property type="term" value="P:proteolysis"/>
    <property type="evidence" value="ECO:0000318"/>
    <property type="project" value="GO_Central"/>
</dbReference>
<dbReference type="CDD" id="cd00433">
    <property type="entry name" value="Peptidase_M17"/>
    <property type="match status" value="1"/>
</dbReference>
<dbReference type="FunFam" id="3.40.220.10:FF:000001">
    <property type="entry name" value="Probable cytosol aminopeptidase"/>
    <property type="match status" value="1"/>
</dbReference>
<dbReference type="FunFam" id="3.40.630.10:FF:000004">
    <property type="entry name" value="Probable cytosol aminopeptidase"/>
    <property type="match status" value="1"/>
</dbReference>
<dbReference type="Gene3D" id="3.40.220.10">
    <property type="entry name" value="Leucine Aminopeptidase, subunit E, domain 1"/>
    <property type="match status" value="1"/>
</dbReference>
<dbReference type="Gene3D" id="3.40.630.10">
    <property type="entry name" value="Zn peptidases"/>
    <property type="match status" value="1"/>
</dbReference>
<dbReference type="HAMAP" id="MF_00181">
    <property type="entry name" value="Cytosol_peptidase_M17"/>
    <property type="match status" value="1"/>
</dbReference>
<dbReference type="InterPro" id="IPR011356">
    <property type="entry name" value="Leucine_aapep/pepB"/>
</dbReference>
<dbReference type="InterPro" id="IPR043472">
    <property type="entry name" value="Macro_dom-like"/>
</dbReference>
<dbReference type="InterPro" id="IPR000819">
    <property type="entry name" value="Peptidase_M17_C"/>
</dbReference>
<dbReference type="InterPro" id="IPR023042">
    <property type="entry name" value="Peptidase_M17_leu_NH2_pept"/>
</dbReference>
<dbReference type="InterPro" id="IPR008283">
    <property type="entry name" value="Peptidase_M17_N"/>
</dbReference>
<dbReference type="NCBIfam" id="NF002072">
    <property type="entry name" value="PRK00913.1-1"/>
    <property type="match status" value="1"/>
</dbReference>
<dbReference type="NCBIfam" id="NF002074">
    <property type="entry name" value="PRK00913.1-4"/>
    <property type="match status" value="1"/>
</dbReference>
<dbReference type="PANTHER" id="PTHR11963:SF23">
    <property type="entry name" value="CYTOSOL AMINOPEPTIDASE"/>
    <property type="match status" value="1"/>
</dbReference>
<dbReference type="PANTHER" id="PTHR11963">
    <property type="entry name" value="LEUCINE AMINOPEPTIDASE-RELATED"/>
    <property type="match status" value="1"/>
</dbReference>
<dbReference type="Pfam" id="PF00883">
    <property type="entry name" value="Peptidase_M17"/>
    <property type="match status" value="1"/>
</dbReference>
<dbReference type="Pfam" id="PF02789">
    <property type="entry name" value="Peptidase_M17_N"/>
    <property type="match status" value="1"/>
</dbReference>
<dbReference type="PRINTS" id="PR00481">
    <property type="entry name" value="LAMNOPPTDASE"/>
</dbReference>
<dbReference type="SUPFAM" id="SSF52949">
    <property type="entry name" value="Macro domain-like"/>
    <property type="match status" value="1"/>
</dbReference>
<dbReference type="SUPFAM" id="SSF53187">
    <property type="entry name" value="Zn-dependent exopeptidases"/>
    <property type="match status" value="1"/>
</dbReference>
<dbReference type="PROSITE" id="PS00631">
    <property type="entry name" value="CYTOSOL_AP"/>
    <property type="match status" value="1"/>
</dbReference>
<gene>
    <name type="primary">pepA</name>
    <name type="ordered locus">VC_2501</name>
</gene>
<keyword id="KW-0031">Aminopeptidase</keyword>
<keyword id="KW-0963">Cytoplasm</keyword>
<keyword id="KW-0378">Hydrolase</keyword>
<keyword id="KW-0464">Manganese</keyword>
<keyword id="KW-0479">Metal-binding</keyword>
<keyword id="KW-0645">Protease</keyword>
<keyword id="KW-1185">Reference proteome</keyword>
<reference key="1">
    <citation type="journal article" date="2000" name="Nature">
        <title>DNA sequence of both chromosomes of the cholera pathogen Vibrio cholerae.</title>
        <authorList>
            <person name="Heidelberg J.F."/>
            <person name="Eisen J.A."/>
            <person name="Nelson W.C."/>
            <person name="Clayton R.A."/>
            <person name="Gwinn M.L."/>
            <person name="Dodson R.J."/>
            <person name="Haft D.H."/>
            <person name="Hickey E.K."/>
            <person name="Peterson J.D."/>
            <person name="Umayam L.A."/>
            <person name="Gill S.R."/>
            <person name="Nelson K.E."/>
            <person name="Read T.D."/>
            <person name="Tettelin H."/>
            <person name="Richardson D.L."/>
            <person name="Ermolaeva M.D."/>
            <person name="Vamathevan J.J."/>
            <person name="Bass S."/>
            <person name="Qin H."/>
            <person name="Dragoi I."/>
            <person name="Sellers P."/>
            <person name="McDonald L.A."/>
            <person name="Utterback T.R."/>
            <person name="Fleischmann R.D."/>
            <person name="Nierman W.C."/>
            <person name="White O."/>
            <person name="Salzberg S.L."/>
            <person name="Smith H.O."/>
            <person name="Colwell R.R."/>
            <person name="Mekalanos J.J."/>
            <person name="Venter J.C."/>
            <person name="Fraser C.M."/>
        </authorList>
    </citation>
    <scope>NUCLEOTIDE SEQUENCE [LARGE SCALE GENOMIC DNA]</scope>
    <source>
        <strain>ATCC 39315 / El Tor Inaba N16961</strain>
    </source>
</reference>
<feature type="chain" id="PRO_0000165809" description="Cytosol aminopeptidase">
    <location>
        <begin position="1"/>
        <end position="503"/>
    </location>
</feature>
<feature type="active site" evidence="2">
    <location>
        <position position="281"/>
    </location>
</feature>
<feature type="active site" evidence="2">
    <location>
        <position position="355"/>
    </location>
</feature>
<feature type="binding site" evidence="1">
    <location>
        <position position="269"/>
    </location>
    <ligand>
        <name>Mn(2+)</name>
        <dbReference type="ChEBI" id="CHEBI:29035"/>
        <label>2</label>
    </ligand>
</feature>
<feature type="binding site" evidence="1">
    <location>
        <position position="274"/>
    </location>
    <ligand>
        <name>Mn(2+)</name>
        <dbReference type="ChEBI" id="CHEBI:29035"/>
        <label>1</label>
    </ligand>
</feature>
<feature type="binding site" evidence="1">
    <location>
        <position position="274"/>
    </location>
    <ligand>
        <name>Mn(2+)</name>
        <dbReference type="ChEBI" id="CHEBI:29035"/>
        <label>2</label>
    </ligand>
</feature>
<feature type="binding site" evidence="1">
    <location>
        <position position="292"/>
    </location>
    <ligand>
        <name>Mn(2+)</name>
        <dbReference type="ChEBI" id="CHEBI:29035"/>
        <label>2</label>
    </ligand>
</feature>
<feature type="binding site" evidence="1">
    <location>
        <position position="351"/>
    </location>
    <ligand>
        <name>Mn(2+)</name>
        <dbReference type="ChEBI" id="CHEBI:29035"/>
        <label>1</label>
    </ligand>
</feature>
<feature type="binding site" evidence="1">
    <location>
        <position position="353"/>
    </location>
    <ligand>
        <name>Mn(2+)</name>
        <dbReference type="ChEBI" id="CHEBI:29035"/>
        <label>1</label>
    </ligand>
</feature>
<feature type="binding site" evidence="1">
    <location>
        <position position="353"/>
    </location>
    <ligand>
        <name>Mn(2+)</name>
        <dbReference type="ChEBI" id="CHEBI:29035"/>
        <label>2</label>
    </ligand>
</feature>
<comment type="function">
    <text evidence="1">Presumably involved in the processing and regular turnover of intracellular proteins. Catalyzes the removal of unsubstituted N-terminal amino acids from various peptides (By similarity).</text>
</comment>
<comment type="catalytic activity">
    <reaction>
        <text>Release of an N-terminal amino acid, Xaa-|-Yaa-, in which Xaa is preferably Leu, but may be other amino acids including Pro although not Arg or Lys, and Yaa may be Pro. Amino acid amides and methyl esters are also readily hydrolyzed, but rates on arylamides are exceedingly low.</text>
        <dbReference type="EC" id="3.4.11.1"/>
    </reaction>
</comment>
<comment type="catalytic activity">
    <reaction>
        <text>Release of an N-terminal amino acid, preferentially leucine, but not glutamic or aspartic acids.</text>
        <dbReference type="EC" id="3.4.11.10"/>
    </reaction>
</comment>
<comment type="cofactor">
    <cofactor evidence="1">
        <name>Mn(2+)</name>
        <dbReference type="ChEBI" id="CHEBI:29035"/>
    </cofactor>
    <text evidence="1">Binds 2 manganese ions per subunit.</text>
</comment>
<comment type="subcellular location">
    <subcellularLocation>
        <location evidence="1">Cytoplasm</location>
    </subcellularLocation>
</comment>
<comment type="similarity">
    <text evidence="3">Belongs to the peptidase M17 family.</text>
</comment>
<protein>
    <recommendedName>
        <fullName>Cytosol aminopeptidase</fullName>
        <ecNumber>3.4.11.1</ecNumber>
    </recommendedName>
    <alternativeName>
        <fullName>Leucine aminopeptidase</fullName>
        <shortName>LAP</shortName>
        <ecNumber>3.4.11.10</ecNumber>
    </alternativeName>
    <alternativeName>
        <fullName>Leucyl aminopeptidase</fullName>
    </alternativeName>
</protein>
<sequence length="503" mass="54618">MEFSVKSGSPEKQRSACIVVGVFEPRRLSPVAEQLDKISDGYISSLLRRGDLEGKPGQMLLLHQVPGVLSERVLLVGCGKERELGERQYKEIIQKTINTLNETGSMEAVCFLTELHVKGRDTYWKVRQAVEATKDGLYIFDQFKSVKPEIRRPLRKLVFNVPTRRELNLGERAITHGLAISSGVKACKDLGNMPPNIANPAYLASQARRLADDYESITTKIIGEEEMEKLGMASYLAVGRGSRNESMMSVIEYKGNPDPEAKPIVLVGKGLTFDSGGISLKPGEGMDEMKYDMCGAASVFGTMKAIAKLGLPLNVIGVLAGCENMPGSNAYRPGDILTTMSGQTVEVLNTDAEGRLVLCDVLTYVERFEPECVVDVATLTGACVIALGHHISAVMSNHNPLAHELVNASEQSSDRAWRLPLADEYHEQLKSPFADMANIGGRPGGAITAACFLSKFAKKYNWAHLDIAGTAWKSGAAKGSTGRPVSLLVQFLLNRSGGLDAEE</sequence>
<organism>
    <name type="scientific">Vibrio cholerae serotype O1 (strain ATCC 39315 / El Tor Inaba N16961)</name>
    <dbReference type="NCBI Taxonomy" id="243277"/>
    <lineage>
        <taxon>Bacteria</taxon>
        <taxon>Pseudomonadati</taxon>
        <taxon>Pseudomonadota</taxon>
        <taxon>Gammaproteobacteria</taxon>
        <taxon>Vibrionales</taxon>
        <taxon>Vibrionaceae</taxon>
        <taxon>Vibrio</taxon>
    </lineage>
</organism>
<accession>P0C6E1</accession>
<accession>Q9K2W5</accession>
<proteinExistence type="inferred from homology"/>
<evidence type="ECO:0000250" key="1"/>
<evidence type="ECO:0000255" key="2"/>
<evidence type="ECO:0000305" key="3"/>
<name>AMPA_VIBCH</name>